<reference key="1">
    <citation type="journal article" date="2006" name="Proc. Natl. Acad. Sci. U.S.A.">
        <title>Molecular genetic anatomy of inter- and intraserotype variation in the human bacterial pathogen group A Streptococcus.</title>
        <authorList>
            <person name="Beres S.B."/>
            <person name="Richter E.W."/>
            <person name="Nagiec M.J."/>
            <person name="Sumby P."/>
            <person name="Porcella S.F."/>
            <person name="DeLeo F.R."/>
            <person name="Musser J.M."/>
        </authorList>
    </citation>
    <scope>NUCLEOTIDE SEQUENCE [LARGE SCALE GENOMIC DNA]</scope>
    <source>
        <strain>MGAS10750</strain>
    </source>
</reference>
<feature type="chain" id="PRO_1000001237" description="Ribosome maturation factor RimM">
    <location>
        <begin position="1"/>
        <end position="172"/>
    </location>
</feature>
<feature type="domain" description="PRC barrel" evidence="1">
    <location>
        <begin position="96"/>
        <end position="168"/>
    </location>
</feature>
<accession>Q1J778</accession>
<keyword id="KW-0143">Chaperone</keyword>
<keyword id="KW-0963">Cytoplasm</keyword>
<keyword id="KW-0690">Ribosome biogenesis</keyword>
<keyword id="KW-0698">rRNA processing</keyword>
<organism>
    <name type="scientific">Streptococcus pyogenes serotype M4 (strain MGAS10750)</name>
    <dbReference type="NCBI Taxonomy" id="370554"/>
    <lineage>
        <taxon>Bacteria</taxon>
        <taxon>Bacillati</taxon>
        <taxon>Bacillota</taxon>
        <taxon>Bacilli</taxon>
        <taxon>Lactobacillales</taxon>
        <taxon>Streptococcaceae</taxon>
        <taxon>Streptococcus</taxon>
    </lineage>
</organism>
<protein>
    <recommendedName>
        <fullName evidence="1">Ribosome maturation factor RimM</fullName>
    </recommendedName>
</protein>
<dbReference type="EMBL" id="CP000262">
    <property type="protein sequence ID" value="ABF37696.1"/>
    <property type="molecule type" value="Genomic_DNA"/>
</dbReference>
<dbReference type="SMR" id="Q1J778"/>
<dbReference type="KEGG" id="spi:MGAS10750_Spy0746"/>
<dbReference type="HOGENOM" id="CLU_077636_3_1_9"/>
<dbReference type="Proteomes" id="UP000002434">
    <property type="component" value="Chromosome"/>
</dbReference>
<dbReference type="GO" id="GO:0005737">
    <property type="term" value="C:cytoplasm"/>
    <property type="evidence" value="ECO:0007669"/>
    <property type="project" value="UniProtKB-SubCell"/>
</dbReference>
<dbReference type="GO" id="GO:0005840">
    <property type="term" value="C:ribosome"/>
    <property type="evidence" value="ECO:0007669"/>
    <property type="project" value="InterPro"/>
</dbReference>
<dbReference type="GO" id="GO:0043022">
    <property type="term" value="F:ribosome binding"/>
    <property type="evidence" value="ECO:0007669"/>
    <property type="project" value="InterPro"/>
</dbReference>
<dbReference type="GO" id="GO:0042274">
    <property type="term" value="P:ribosomal small subunit biogenesis"/>
    <property type="evidence" value="ECO:0007669"/>
    <property type="project" value="UniProtKB-UniRule"/>
</dbReference>
<dbReference type="GO" id="GO:0006364">
    <property type="term" value="P:rRNA processing"/>
    <property type="evidence" value="ECO:0007669"/>
    <property type="project" value="UniProtKB-UniRule"/>
</dbReference>
<dbReference type="Gene3D" id="2.30.30.240">
    <property type="entry name" value="PRC-barrel domain"/>
    <property type="match status" value="1"/>
</dbReference>
<dbReference type="Gene3D" id="2.40.30.60">
    <property type="entry name" value="RimM"/>
    <property type="match status" value="1"/>
</dbReference>
<dbReference type="HAMAP" id="MF_00014">
    <property type="entry name" value="Ribosome_mat_RimM"/>
    <property type="match status" value="1"/>
</dbReference>
<dbReference type="InterPro" id="IPR027275">
    <property type="entry name" value="PRC-brl_dom"/>
</dbReference>
<dbReference type="InterPro" id="IPR011033">
    <property type="entry name" value="PRC_barrel-like_sf"/>
</dbReference>
<dbReference type="InterPro" id="IPR011961">
    <property type="entry name" value="RimM"/>
</dbReference>
<dbReference type="InterPro" id="IPR002676">
    <property type="entry name" value="RimM_N"/>
</dbReference>
<dbReference type="InterPro" id="IPR036976">
    <property type="entry name" value="RimM_N_sf"/>
</dbReference>
<dbReference type="InterPro" id="IPR009000">
    <property type="entry name" value="Transl_B-barrel_sf"/>
</dbReference>
<dbReference type="NCBIfam" id="TIGR02273">
    <property type="entry name" value="16S_RimM"/>
    <property type="match status" value="1"/>
</dbReference>
<dbReference type="PANTHER" id="PTHR33692">
    <property type="entry name" value="RIBOSOME MATURATION FACTOR RIMM"/>
    <property type="match status" value="1"/>
</dbReference>
<dbReference type="PANTHER" id="PTHR33692:SF1">
    <property type="entry name" value="RIBOSOME MATURATION FACTOR RIMM"/>
    <property type="match status" value="1"/>
</dbReference>
<dbReference type="Pfam" id="PF05239">
    <property type="entry name" value="PRC"/>
    <property type="match status" value="1"/>
</dbReference>
<dbReference type="Pfam" id="PF01782">
    <property type="entry name" value="RimM"/>
    <property type="match status" value="1"/>
</dbReference>
<dbReference type="SUPFAM" id="SSF50346">
    <property type="entry name" value="PRC-barrel domain"/>
    <property type="match status" value="1"/>
</dbReference>
<dbReference type="SUPFAM" id="SSF50447">
    <property type="entry name" value="Translation proteins"/>
    <property type="match status" value="1"/>
</dbReference>
<name>RIMM_STRPF</name>
<proteinExistence type="inferred from homology"/>
<comment type="function">
    <text evidence="1">An accessory protein needed during the final step in the assembly of 30S ribosomal subunit, possibly for assembly of the head region. Essential for efficient processing of 16S rRNA. May be needed both before and after RbfA during the maturation of 16S rRNA. It has affinity for free ribosomal 30S subunits but not for 70S ribosomes.</text>
</comment>
<comment type="subunit">
    <text evidence="1">Binds ribosomal protein uS19.</text>
</comment>
<comment type="subcellular location">
    <subcellularLocation>
        <location evidence="1">Cytoplasm</location>
    </subcellularLocation>
</comment>
<comment type="domain">
    <text evidence="1">The PRC barrel domain binds ribosomal protein uS19.</text>
</comment>
<comment type="similarity">
    <text evidence="1">Belongs to the RimM family.</text>
</comment>
<gene>
    <name evidence="1" type="primary">rimM</name>
    <name type="ordered locus">MGAS10750_Spy0746</name>
</gene>
<evidence type="ECO:0000255" key="1">
    <source>
        <dbReference type="HAMAP-Rule" id="MF_00014"/>
    </source>
</evidence>
<sequence>MEYFNVGKIVNTQGLQGEMRVLSVSDFAEERFKKGSQLALFDDKDRFVQEVTIVSHRKQKHFDIIKLKDMYHINAIEKYKGYTLKVSKDNQGDLQEGEFYYHQIIGMAVYEKDRLIGYVKEILQPGANDVWVVKRQGKRDLLLPYIPPVVLNVDVPNKRVDVELMEGLDDED</sequence>